<evidence type="ECO:0000250" key="1"/>
<evidence type="ECO:0000255" key="2">
    <source>
        <dbReference type="PROSITE-ProRule" id="PRU00541"/>
    </source>
</evidence>
<evidence type="ECO:0000255" key="3">
    <source>
        <dbReference type="PROSITE-ProRule" id="PRU00542"/>
    </source>
</evidence>
<evidence type="ECO:0000255" key="4">
    <source>
        <dbReference type="PROSITE-ProRule" id="PRU00549"/>
    </source>
</evidence>
<evidence type="ECO:0000256" key="5">
    <source>
        <dbReference type="SAM" id="MobiDB-lite"/>
    </source>
</evidence>
<evidence type="ECO:0000305" key="6"/>
<feature type="chain" id="PRO_0000074370" description="Helicase SWR1">
    <location>
        <begin position="1"/>
        <end position="1572"/>
    </location>
</feature>
<feature type="domain" description="HSA" evidence="4">
    <location>
        <begin position="424"/>
        <end position="496"/>
    </location>
</feature>
<feature type="domain" description="Helicase ATP-binding" evidence="2">
    <location>
        <begin position="777"/>
        <end position="942"/>
    </location>
</feature>
<feature type="domain" description="Helicase C-terminal" evidence="3">
    <location>
        <begin position="1314"/>
        <end position="1464"/>
    </location>
</feature>
<feature type="region of interest" description="Disordered" evidence="5">
    <location>
        <begin position="61"/>
        <end position="94"/>
    </location>
</feature>
<feature type="region of interest" description="Disordered" evidence="5">
    <location>
        <begin position="119"/>
        <end position="291"/>
    </location>
</feature>
<feature type="region of interest" description="Disordered" evidence="5">
    <location>
        <begin position="304"/>
        <end position="323"/>
    </location>
</feature>
<feature type="region of interest" description="Disordered" evidence="5">
    <location>
        <begin position="555"/>
        <end position="604"/>
    </location>
</feature>
<feature type="region of interest" description="Disordered" evidence="5">
    <location>
        <begin position="624"/>
        <end position="675"/>
    </location>
</feature>
<feature type="region of interest" description="Disordered" evidence="5">
    <location>
        <begin position="694"/>
        <end position="749"/>
    </location>
</feature>
<feature type="region of interest" description="Disordered" evidence="5">
    <location>
        <begin position="1505"/>
        <end position="1556"/>
    </location>
</feature>
<feature type="short sequence motif" description="DEAH box">
    <location>
        <begin position="893"/>
        <end position="896"/>
    </location>
</feature>
<feature type="compositionally biased region" description="Polar residues" evidence="5">
    <location>
        <begin position="82"/>
        <end position="94"/>
    </location>
</feature>
<feature type="compositionally biased region" description="Polar residues" evidence="5">
    <location>
        <begin position="152"/>
        <end position="173"/>
    </location>
</feature>
<feature type="compositionally biased region" description="Basic and acidic residues" evidence="5">
    <location>
        <begin position="179"/>
        <end position="192"/>
    </location>
</feature>
<feature type="compositionally biased region" description="Basic residues" evidence="5">
    <location>
        <begin position="216"/>
        <end position="232"/>
    </location>
</feature>
<feature type="compositionally biased region" description="Basic and acidic residues" evidence="5">
    <location>
        <begin position="238"/>
        <end position="269"/>
    </location>
</feature>
<feature type="compositionally biased region" description="Polar residues" evidence="5">
    <location>
        <begin position="282"/>
        <end position="291"/>
    </location>
</feature>
<feature type="compositionally biased region" description="Low complexity" evidence="5">
    <location>
        <begin position="558"/>
        <end position="568"/>
    </location>
</feature>
<feature type="compositionally biased region" description="Acidic residues" evidence="5">
    <location>
        <begin position="569"/>
        <end position="583"/>
    </location>
</feature>
<feature type="compositionally biased region" description="Basic and acidic residues" evidence="5">
    <location>
        <begin position="590"/>
        <end position="602"/>
    </location>
</feature>
<feature type="compositionally biased region" description="Low complexity" evidence="5">
    <location>
        <begin position="643"/>
        <end position="657"/>
    </location>
</feature>
<feature type="compositionally biased region" description="Acidic residues" evidence="5">
    <location>
        <begin position="694"/>
        <end position="705"/>
    </location>
</feature>
<feature type="compositionally biased region" description="Basic and acidic residues" evidence="5">
    <location>
        <begin position="726"/>
        <end position="737"/>
    </location>
</feature>
<feature type="compositionally biased region" description="Basic and acidic residues" evidence="5">
    <location>
        <begin position="1511"/>
        <end position="1522"/>
    </location>
</feature>
<feature type="compositionally biased region" description="Acidic residues" evidence="5">
    <location>
        <begin position="1543"/>
        <end position="1552"/>
    </location>
</feature>
<feature type="binding site" evidence="2">
    <location>
        <begin position="790"/>
        <end position="797"/>
    </location>
    <ligand>
        <name>ATP</name>
        <dbReference type="ChEBI" id="CHEBI:30616"/>
    </ligand>
</feature>
<protein>
    <recommendedName>
        <fullName>Helicase SWR1</fullName>
        <ecNumber>3.6.4.12</ecNumber>
    </recommendedName>
</protein>
<organism>
    <name type="scientific">Kluyveromyces lactis (strain ATCC 8585 / CBS 2359 / DSM 70799 / NBRC 1267 / NRRL Y-1140 / WM37)</name>
    <name type="common">Yeast</name>
    <name type="synonym">Candida sphaerica</name>
    <dbReference type="NCBI Taxonomy" id="284590"/>
    <lineage>
        <taxon>Eukaryota</taxon>
        <taxon>Fungi</taxon>
        <taxon>Dikarya</taxon>
        <taxon>Ascomycota</taxon>
        <taxon>Saccharomycotina</taxon>
        <taxon>Saccharomycetes</taxon>
        <taxon>Saccharomycetales</taxon>
        <taxon>Saccharomycetaceae</taxon>
        <taxon>Kluyveromyces</taxon>
    </lineage>
</organism>
<gene>
    <name type="primary">SWR1</name>
    <name type="ordered locus">KLLA0F21758g</name>
</gene>
<sequence length="1572" mass="179228">MPEVRDWRQLAKTRLEYELLTNELFHLWEFTSLVEYDPLFRNTSNSFKTFLQERGLDVESSLEQDDMKESNASRRLKRRNVISGTADSSSDKNNIWGQVMPLVDQEYSELQEKLRASVCGRRGRKRTQQVASVPAESEEDVAVPRPNKKRQTVVTAQGSAQNKLNTPVVSSPKKSLKQTADKKSKLNKRDSSTNDISVESEDPPVKDITNTGQGKSKARLKSSKAKSKKRAVKSQTELVRKQSPEIKNESKRTKADPTHTNDDGNDNRKTNNKSKNIINNNESGLKTSLNTTGDIIDDEEYYFTSSSEDDDNEKPRTALQKKSLPNRLKVKLHVNAPRQTITNPLHVLKPEYADVHSFLQSYKSLDEDVSLEEYDSYIKEQRKTAKLIRIGFERGAIKYDPQTDSLQSLSLRDVMPPSNAAEPISVYYKEQSKHTFQDHLVNQGIVLSKSFQDSRRSQIAKARRVAQIIESHFKHIAGAEERKLKEEEKRKKNLARFAMQAVKKRWTMAEKAYKVLKKDELDQLERIQGKQHLTEMLEQSTQLLGAQLNQLDSCTYPSEASDASSEFSANEESDGNSDIDDEMMSTSSCDSDKEGNTERIGNDMELSVEELRSKYAQLNKINDFGNETSKSAADESIFDEASDSVSDSMEDSLSSSESETEDADASAQEDTPGLSALLGNIDENEEDVEADVNFDADSSSDDGLDGDSSGAENNSKTEELPSPPKSDNELKDEKAETTESVTSPAAADPLAVSDVPVPSLLRGTLRIYQKQGLNWLASLYNNKTNGILADEMGLGKTIQTISLLAYLACEKENWGPHLIVVPTSVLLNWEMEFKRFAPGFKVLTYYGSPQQRREKRKGWNKPDAFHVCITSYQLVVHDQHSFKRKKWQYMILDEAHNIKNFRSTRWQALLNFNTERRLLLTGTPLQNNLAELWSLLYFLMPQTALENGKVSGFADLDAFQQWFGRPVDKIVETGENYEQDEETKKTVSKLHQVLRPYLLRRLKADVEKQMPGKYEHIIYCRLSKRQRFLYDDFMSRAQTKETLASGNFMSIINCLMQLRKVCNHPDLFEVRPILTSFCIEDSVSKSYCDLNNYVYNRLHENQFETSVDLSNLNFQFTSNDKTLSTNHSEKISELQCVQPILKEISRLKQLNENDSPVTQPDFQDLNQYYSYAKHNKINEIIGQLEHLNYMNNLRCNRRPMYGSNIVKLLTVGPKKFIDCELTQESIKPLETRLLEGKETIEKFAVITPPVVTLDIRERAVGVDDNNKRFEESVKHHLVSQMRSLENPFHQLQTKLSVAFPDKSLLQYDCGKLQKLAQLLQNLKDNGHRALIFTQMTKVLDILEQFLNFHGYLYMRLDGATKIEDRQILTERFNSDPRITVFILSSRSGGLGINLTGADTVIFYDSDWNPAMDKQCQDRCHRIGQTRDVHIYRFVSDHTIESNILKKANQKRHLDNVVIQTGDFTTDYFTKLSVKDLLGAEAPEDIPDDKPLLQDQKNLNKLLAQAEDEDDAKAAKSALREVNVDNEDFQEGSVAAQDGNSDNENNEDSEDEYGGTSHVEEYMVRFIANGFYY</sequence>
<name>SWR1_KLULA</name>
<keyword id="KW-0010">Activator</keyword>
<keyword id="KW-0067">ATP-binding</keyword>
<keyword id="KW-0156">Chromatin regulator</keyword>
<keyword id="KW-0238">DNA-binding</keyword>
<keyword id="KW-0347">Helicase</keyword>
<keyword id="KW-0378">Hydrolase</keyword>
<keyword id="KW-0547">Nucleotide-binding</keyword>
<keyword id="KW-0539">Nucleus</keyword>
<keyword id="KW-1185">Reference proteome</keyword>
<keyword id="KW-0804">Transcription</keyword>
<keyword id="KW-0805">Transcription regulation</keyword>
<reference key="1">
    <citation type="journal article" date="2004" name="Nature">
        <title>Genome evolution in yeasts.</title>
        <authorList>
            <person name="Dujon B."/>
            <person name="Sherman D."/>
            <person name="Fischer G."/>
            <person name="Durrens P."/>
            <person name="Casaregola S."/>
            <person name="Lafontaine I."/>
            <person name="de Montigny J."/>
            <person name="Marck C."/>
            <person name="Neuveglise C."/>
            <person name="Talla E."/>
            <person name="Goffard N."/>
            <person name="Frangeul L."/>
            <person name="Aigle M."/>
            <person name="Anthouard V."/>
            <person name="Babour A."/>
            <person name="Barbe V."/>
            <person name="Barnay S."/>
            <person name="Blanchin S."/>
            <person name="Beckerich J.-M."/>
            <person name="Beyne E."/>
            <person name="Bleykasten C."/>
            <person name="Boisrame A."/>
            <person name="Boyer J."/>
            <person name="Cattolico L."/>
            <person name="Confanioleri F."/>
            <person name="de Daruvar A."/>
            <person name="Despons L."/>
            <person name="Fabre E."/>
            <person name="Fairhead C."/>
            <person name="Ferry-Dumazet H."/>
            <person name="Groppi A."/>
            <person name="Hantraye F."/>
            <person name="Hennequin C."/>
            <person name="Jauniaux N."/>
            <person name="Joyet P."/>
            <person name="Kachouri R."/>
            <person name="Kerrest A."/>
            <person name="Koszul R."/>
            <person name="Lemaire M."/>
            <person name="Lesur I."/>
            <person name="Ma L."/>
            <person name="Muller H."/>
            <person name="Nicaud J.-M."/>
            <person name="Nikolski M."/>
            <person name="Oztas S."/>
            <person name="Ozier-Kalogeropoulos O."/>
            <person name="Pellenz S."/>
            <person name="Potier S."/>
            <person name="Richard G.-F."/>
            <person name="Straub M.-L."/>
            <person name="Suleau A."/>
            <person name="Swennen D."/>
            <person name="Tekaia F."/>
            <person name="Wesolowski-Louvel M."/>
            <person name="Westhof E."/>
            <person name="Wirth B."/>
            <person name="Zeniou-Meyer M."/>
            <person name="Zivanovic Y."/>
            <person name="Bolotin-Fukuhara M."/>
            <person name="Thierry A."/>
            <person name="Bouchier C."/>
            <person name="Caudron B."/>
            <person name="Scarpelli C."/>
            <person name="Gaillardin C."/>
            <person name="Weissenbach J."/>
            <person name="Wincker P."/>
            <person name="Souciet J.-L."/>
        </authorList>
    </citation>
    <scope>NUCLEOTIDE SEQUENCE [LARGE SCALE GENOMIC DNA]</scope>
    <source>
        <strain>ATCC 8585 / CBS 2359 / DSM 70799 / NBRC 1267 / NRRL Y-1140 / WM37</strain>
    </source>
</reference>
<comment type="function">
    <text evidence="1">Catalytic component of the SWR1 complex which mediates the ATP-dependent exchange of histone H2A for the H2A variant HZT1 leading to transcriptional regulation of selected genes by chromatin remodeling.</text>
</comment>
<comment type="catalytic activity">
    <reaction>
        <text>ATP + H2O = ADP + phosphate + H(+)</text>
        <dbReference type="Rhea" id="RHEA:13065"/>
        <dbReference type="ChEBI" id="CHEBI:15377"/>
        <dbReference type="ChEBI" id="CHEBI:15378"/>
        <dbReference type="ChEBI" id="CHEBI:30616"/>
        <dbReference type="ChEBI" id="CHEBI:43474"/>
        <dbReference type="ChEBI" id="CHEBI:456216"/>
        <dbReference type="EC" id="3.6.4.12"/>
    </reaction>
</comment>
<comment type="subunit">
    <text evidence="1">Component of the SWR1 chromatin-remodeling complex.</text>
</comment>
<comment type="subcellular location">
    <subcellularLocation>
        <location evidence="4">Nucleus</location>
    </subcellularLocation>
</comment>
<comment type="similarity">
    <text evidence="6">Belongs to the SNF2/RAD54 helicase family. SWR1 subfamily.</text>
</comment>
<proteinExistence type="inferred from homology"/>
<dbReference type="EC" id="3.6.4.12"/>
<dbReference type="EMBL" id="CR382126">
    <property type="protein sequence ID" value="CAG98759.1"/>
    <property type="molecule type" value="Genomic_DNA"/>
</dbReference>
<dbReference type="RefSeq" id="XP_456051.1">
    <property type="nucleotide sequence ID" value="XM_456051.1"/>
</dbReference>
<dbReference type="SMR" id="Q6CJ38"/>
<dbReference type="FunCoup" id="Q6CJ38">
    <property type="interactions" value="245"/>
</dbReference>
<dbReference type="STRING" id="284590.Q6CJ38"/>
<dbReference type="PaxDb" id="284590-Q6CJ38"/>
<dbReference type="KEGG" id="kla:KLLA0_F21758g"/>
<dbReference type="eggNOG" id="KOG0391">
    <property type="taxonomic scope" value="Eukaryota"/>
</dbReference>
<dbReference type="HOGENOM" id="CLU_000315_24_4_1"/>
<dbReference type="InParanoid" id="Q6CJ38"/>
<dbReference type="OMA" id="AFQQWFG"/>
<dbReference type="Proteomes" id="UP000000598">
    <property type="component" value="Chromosome F"/>
</dbReference>
<dbReference type="GO" id="GO:0000812">
    <property type="term" value="C:Swr1 complex"/>
    <property type="evidence" value="ECO:0007669"/>
    <property type="project" value="TreeGrafter"/>
</dbReference>
<dbReference type="GO" id="GO:0005524">
    <property type="term" value="F:ATP binding"/>
    <property type="evidence" value="ECO:0007669"/>
    <property type="project" value="UniProtKB-KW"/>
</dbReference>
<dbReference type="GO" id="GO:0016887">
    <property type="term" value="F:ATP hydrolysis activity"/>
    <property type="evidence" value="ECO:0007669"/>
    <property type="project" value="RHEA"/>
</dbReference>
<dbReference type="GO" id="GO:0003677">
    <property type="term" value="F:DNA binding"/>
    <property type="evidence" value="ECO:0007669"/>
    <property type="project" value="UniProtKB-KW"/>
</dbReference>
<dbReference type="GO" id="GO:0004386">
    <property type="term" value="F:helicase activity"/>
    <property type="evidence" value="ECO:0007669"/>
    <property type="project" value="UniProtKB-KW"/>
</dbReference>
<dbReference type="GO" id="GO:0042393">
    <property type="term" value="F:histone binding"/>
    <property type="evidence" value="ECO:0007669"/>
    <property type="project" value="TreeGrafter"/>
</dbReference>
<dbReference type="GO" id="GO:0006338">
    <property type="term" value="P:chromatin remodeling"/>
    <property type="evidence" value="ECO:0007669"/>
    <property type="project" value="TreeGrafter"/>
</dbReference>
<dbReference type="CDD" id="cd18003">
    <property type="entry name" value="DEXQc_SRCAP"/>
    <property type="match status" value="1"/>
</dbReference>
<dbReference type="CDD" id="cd18793">
    <property type="entry name" value="SF2_C_SNF"/>
    <property type="match status" value="1"/>
</dbReference>
<dbReference type="FunFam" id="3.40.50.10810:FF:000005">
    <property type="entry name" value="Photoperiod-independent early flowering 1"/>
    <property type="match status" value="1"/>
</dbReference>
<dbReference type="FunFam" id="3.40.50.300:FF:000655">
    <property type="entry name" value="Protein PHOTOPERIOD-INDEPENDENT EARLY FLOWERING 1"/>
    <property type="match status" value="1"/>
</dbReference>
<dbReference type="Gene3D" id="3.40.50.300">
    <property type="entry name" value="P-loop containing nucleotide triphosphate hydrolases"/>
    <property type="match status" value="1"/>
</dbReference>
<dbReference type="Gene3D" id="1.20.120.850">
    <property type="entry name" value="SWI2/SNF2 ATPases, N-terminal domain"/>
    <property type="match status" value="1"/>
</dbReference>
<dbReference type="Gene3D" id="3.40.50.10810">
    <property type="entry name" value="Tandem AAA-ATPase domain"/>
    <property type="match status" value="1"/>
</dbReference>
<dbReference type="InterPro" id="IPR014001">
    <property type="entry name" value="Helicase_ATP-bd"/>
</dbReference>
<dbReference type="InterPro" id="IPR001650">
    <property type="entry name" value="Helicase_C-like"/>
</dbReference>
<dbReference type="InterPro" id="IPR014012">
    <property type="entry name" value="HSA_dom"/>
</dbReference>
<dbReference type="InterPro" id="IPR050520">
    <property type="entry name" value="INO80/SWR1_helicase"/>
</dbReference>
<dbReference type="InterPro" id="IPR027417">
    <property type="entry name" value="P-loop_NTPase"/>
</dbReference>
<dbReference type="InterPro" id="IPR038718">
    <property type="entry name" value="SNF2-like_sf"/>
</dbReference>
<dbReference type="InterPro" id="IPR049730">
    <property type="entry name" value="SNF2/RAD54-like_C"/>
</dbReference>
<dbReference type="InterPro" id="IPR000330">
    <property type="entry name" value="SNF2_N"/>
</dbReference>
<dbReference type="PANTHER" id="PTHR45685:SF1">
    <property type="entry name" value="HELICASE SRCAP"/>
    <property type="match status" value="1"/>
</dbReference>
<dbReference type="PANTHER" id="PTHR45685">
    <property type="entry name" value="HELICASE SRCAP-RELATED"/>
    <property type="match status" value="1"/>
</dbReference>
<dbReference type="Pfam" id="PF00271">
    <property type="entry name" value="Helicase_C"/>
    <property type="match status" value="1"/>
</dbReference>
<dbReference type="Pfam" id="PF07529">
    <property type="entry name" value="HSA"/>
    <property type="match status" value="1"/>
</dbReference>
<dbReference type="Pfam" id="PF00176">
    <property type="entry name" value="SNF2-rel_dom"/>
    <property type="match status" value="1"/>
</dbReference>
<dbReference type="SMART" id="SM00487">
    <property type="entry name" value="DEXDc"/>
    <property type="match status" value="1"/>
</dbReference>
<dbReference type="SMART" id="SM00490">
    <property type="entry name" value="HELICc"/>
    <property type="match status" value="1"/>
</dbReference>
<dbReference type="SMART" id="SM00573">
    <property type="entry name" value="HSA"/>
    <property type="match status" value="1"/>
</dbReference>
<dbReference type="SUPFAM" id="SSF52540">
    <property type="entry name" value="P-loop containing nucleoside triphosphate hydrolases"/>
    <property type="match status" value="2"/>
</dbReference>
<dbReference type="PROSITE" id="PS51192">
    <property type="entry name" value="HELICASE_ATP_BIND_1"/>
    <property type="match status" value="1"/>
</dbReference>
<dbReference type="PROSITE" id="PS51194">
    <property type="entry name" value="HELICASE_CTER"/>
    <property type="match status" value="1"/>
</dbReference>
<dbReference type="PROSITE" id="PS51204">
    <property type="entry name" value="HSA"/>
    <property type="match status" value="1"/>
</dbReference>
<accession>Q6CJ38</accession>